<evidence type="ECO:0000255" key="1">
    <source>
        <dbReference type="HAMAP-Rule" id="MF_00595"/>
    </source>
</evidence>
<gene>
    <name evidence="1" type="primary">ppc</name>
    <name type="ordered locus">ECS88_4411</name>
</gene>
<accession>B7MI92</accession>
<dbReference type="EC" id="4.1.1.31" evidence="1"/>
<dbReference type="EMBL" id="CU928161">
    <property type="protein sequence ID" value="CAR05590.1"/>
    <property type="molecule type" value="Genomic_DNA"/>
</dbReference>
<dbReference type="RefSeq" id="WP_001005584.1">
    <property type="nucleotide sequence ID" value="NC_011742.1"/>
</dbReference>
<dbReference type="SMR" id="B7MI92"/>
<dbReference type="KEGG" id="ecz:ECS88_4411"/>
<dbReference type="HOGENOM" id="CLU_006557_2_0_6"/>
<dbReference type="Proteomes" id="UP000000747">
    <property type="component" value="Chromosome"/>
</dbReference>
<dbReference type="GO" id="GO:0005829">
    <property type="term" value="C:cytosol"/>
    <property type="evidence" value="ECO:0007669"/>
    <property type="project" value="TreeGrafter"/>
</dbReference>
<dbReference type="GO" id="GO:0000287">
    <property type="term" value="F:magnesium ion binding"/>
    <property type="evidence" value="ECO:0007669"/>
    <property type="project" value="UniProtKB-UniRule"/>
</dbReference>
<dbReference type="GO" id="GO:0008964">
    <property type="term" value="F:phosphoenolpyruvate carboxylase activity"/>
    <property type="evidence" value="ECO:0007669"/>
    <property type="project" value="UniProtKB-UniRule"/>
</dbReference>
<dbReference type="GO" id="GO:0015977">
    <property type="term" value="P:carbon fixation"/>
    <property type="evidence" value="ECO:0007669"/>
    <property type="project" value="UniProtKB-UniRule"/>
</dbReference>
<dbReference type="GO" id="GO:0006107">
    <property type="term" value="P:oxaloacetate metabolic process"/>
    <property type="evidence" value="ECO:0007669"/>
    <property type="project" value="UniProtKB-UniRule"/>
</dbReference>
<dbReference type="GO" id="GO:0006099">
    <property type="term" value="P:tricarboxylic acid cycle"/>
    <property type="evidence" value="ECO:0007669"/>
    <property type="project" value="InterPro"/>
</dbReference>
<dbReference type="FunFam" id="1.20.1440.90:FF:000002">
    <property type="entry name" value="Phosphoenolpyruvate carboxylase"/>
    <property type="match status" value="1"/>
</dbReference>
<dbReference type="Gene3D" id="1.20.1440.90">
    <property type="entry name" value="Phosphoenolpyruvate/pyruvate domain"/>
    <property type="match status" value="1"/>
</dbReference>
<dbReference type="HAMAP" id="MF_00595">
    <property type="entry name" value="PEPcase_type1"/>
    <property type="match status" value="1"/>
</dbReference>
<dbReference type="InterPro" id="IPR021135">
    <property type="entry name" value="PEP_COase"/>
</dbReference>
<dbReference type="InterPro" id="IPR022805">
    <property type="entry name" value="PEP_COase_bac/pln-type"/>
</dbReference>
<dbReference type="InterPro" id="IPR018129">
    <property type="entry name" value="PEP_COase_Lys_AS"/>
</dbReference>
<dbReference type="InterPro" id="IPR033129">
    <property type="entry name" value="PEPCASE_His_AS"/>
</dbReference>
<dbReference type="InterPro" id="IPR015813">
    <property type="entry name" value="Pyrv/PenolPyrv_kinase-like_dom"/>
</dbReference>
<dbReference type="NCBIfam" id="NF000584">
    <property type="entry name" value="PRK00009.1"/>
    <property type="match status" value="1"/>
</dbReference>
<dbReference type="PANTHER" id="PTHR30523">
    <property type="entry name" value="PHOSPHOENOLPYRUVATE CARBOXYLASE"/>
    <property type="match status" value="1"/>
</dbReference>
<dbReference type="PANTHER" id="PTHR30523:SF6">
    <property type="entry name" value="PHOSPHOENOLPYRUVATE CARBOXYLASE"/>
    <property type="match status" value="1"/>
</dbReference>
<dbReference type="Pfam" id="PF00311">
    <property type="entry name" value="PEPcase"/>
    <property type="match status" value="1"/>
</dbReference>
<dbReference type="PRINTS" id="PR00150">
    <property type="entry name" value="PEPCARBXLASE"/>
</dbReference>
<dbReference type="SUPFAM" id="SSF51621">
    <property type="entry name" value="Phosphoenolpyruvate/pyruvate domain"/>
    <property type="match status" value="1"/>
</dbReference>
<dbReference type="PROSITE" id="PS00781">
    <property type="entry name" value="PEPCASE_1"/>
    <property type="match status" value="1"/>
</dbReference>
<dbReference type="PROSITE" id="PS00393">
    <property type="entry name" value="PEPCASE_2"/>
    <property type="match status" value="1"/>
</dbReference>
<organism>
    <name type="scientific">Escherichia coli O45:K1 (strain S88 / ExPEC)</name>
    <dbReference type="NCBI Taxonomy" id="585035"/>
    <lineage>
        <taxon>Bacteria</taxon>
        <taxon>Pseudomonadati</taxon>
        <taxon>Pseudomonadota</taxon>
        <taxon>Gammaproteobacteria</taxon>
        <taxon>Enterobacterales</taxon>
        <taxon>Enterobacteriaceae</taxon>
        <taxon>Escherichia</taxon>
    </lineage>
</organism>
<name>CAPP_ECO45</name>
<protein>
    <recommendedName>
        <fullName evidence="1">Phosphoenolpyruvate carboxylase</fullName>
        <shortName evidence="1">PEPC</shortName>
        <shortName evidence="1">PEPCase</shortName>
        <ecNumber evidence="1">4.1.1.31</ecNumber>
    </recommendedName>
</protein>
<proteinExistence type="inferred from homology"/>
<reference key="1">
    <citation type="journal article" date="2009" name="PLoS Genet.">
        <title>Organised genome dynamics in the Escherichia coli species results in highly diverse adaptive paths.</title>
        <authorList>
            <person name="Touchon M."/>
            <person name="Hoede C."/>
            <person name="Tenaillon O."/>
            <person name="Barbe V."/>
            <person name="Baeriswyl S."/>
            <person name="Bidet P."/>
            <person name="Bingen E."/>
            <person name="Bonacorsi S."/>
            <person name="Bouchier C."/>
            <person name="Bouvet O."/>
            <person name="Calteau A."/>
            <person name="Chiapello H."/>
            <person name="Clermont O."/>
            <person name="Cruveiller S."/>
            <person name="Danchin A."/>
            <person name="Diard M."/>
            <person name="Dossat C."/>
            <person name="Karoui M.E."/>
            <person name="Frapy E."/>
            <person name="Garry L."/>
            <person name="Ghigo J.M."/>
            <person name="Gilles A.M."/>
            <person name="Johnson J."/>
            <person name="Le Bouguenec C."/>
            <person name="Lescat M."/>
            <person name="Mangenot S."/>
            <person name="Martinez-Jehanne V."/>
            <person name="Matic I."/>
            <person name="Nassif X."/>
            <person name="Oztas S."/>
            <person name="Petit M.A."/>
            <person name="Pichon C."/>
            <person name="Rouy Z."/>
            <person name="Ruf C.S."/>
            <person name="Schneider D."/>
            <person name="Tourret J."/>
            <person name="Vacherie B."/>
            <person name="Vallenet D."/>
            <person name="Medigue C."/>
            <person name="Rocha E.P.C."/>
            <person name="Denamur E."/>
        </authorList>
    </citation>
    <scope>NUCLEOTIDE SEQUENCE [LARGE SCALE GENOMIC DNA]</scope>
    <source>
        <strain>S88 / ExPEC</strain>
    </source>
</reference>
<feature type="chain" id="PRO_1000129825" description="Phosphoenolpyruvate carboxylase">
    <location>
        <begin position="1"/>
        <end position="883"/>
    </location>
</feature>
<feature type="active site" evidence="1">
    <location>
        <position position="138"/>
    </location>
</feature>
<feature type="active site" evidence="1">
    <location>
        <position position="546"/>
    </location>
</feature>
<keyword id="KW-0120">Carbon dioxide fixation</keyword>
<keyword id="KW-0456">Lyase</keyword>
<keyword id="KW-0460">Magnesium</keyword>
<keyword id="KW-1185">Reference proteome</keyword>
<comment type="function">
    <text evidence="1">Forms oxaloacetate, a four-carbon dicarboxylic acid source for the tricarboxylic acid cycle.</text>
</comment>
<comment type="catalytic activity">
    <reaction evidence="1">
        <text>oxaloacetate + phosphate = phosphoenolpyruvate + hydrogencarbonate</text>
        <dbReference type="Rhea" id="RHEA:28370"/>
        <dbReference type="ChEBI" id="CHEBI:16452"/>
        <dbReference type="ChEBI" id="CHEBI:17544"/>
        <dbReference type="ChEBI" id="CHEBI:43474"/>
        <dbReference type="ChEBI" id="CHEBI:58702"/>
        <dbReference type="EC" id="4.1.1.31"/>
    </reaction>
</comment>
<comment type="cofactor">
    <cofactor evidence="1">
        <name>Mg(2+)</name>
        <dbReference type="ChEBI" id="CHEBI:18420"/>
    </cofactor>
</comment>
<comment type="similarity">
    <text evidence="1">Belongs to the PEPCase type 1 family.</text>
</comment>
<sequence>MNEQYSALRSNVSMLGKVLGETIKDALGEHILERVETIRKLSKSSRAGNDANRQELLTTLQNLSNDELLPVARAFSQFLNLANTAEQYHSISPKGEAASNPEVIARTLRKLKNQPELSEDTIKKAVESLSLELVLTAHPTEITRRTLIHKMVEVNACLKQLDNKDIADYEHNQLMRRLRQLIAQSWHTDEIRKLRPSPVDEAKWGFAVVENSLWQGVPNYLRELNEQLEENLGYKLPVEFVPVRFTSWMGGDRDGNPNVTADITRHVLLLSRWKATDLFLKDIQVLVSELSMVEATPELLALVGEEGAAEPYRYLMKNLRSRLMATQAWLEARLKGEELPKPEGLLTQNEELWEPLYACYQSLQACGMGIIANGDLLDTLRRVKCFGVPLVRIDIRQESTRHTEALGELTRYLGIGDYESWSEADKQAFLIRELNSKRPLLPRNWQPSAETREVLDTCQVIAEAPQGSIAAYVISMAKTPSDVLAVHLLLKEAGIGFAMPVAPLFETLDDLNNANDVMTQLLNIDWYRGLIQGKQMVMIGYSDSAKDAGVMAASWAQYQAQDALIKTCEKAGIELTLFHGRGGSIGRGGAPAHAALLSQPPGSLKGGLRVTEQGEMIRFKYGLPEITVSSLSLYTGAILEANLLPPPEPKESWRRIMDELSVISCDVYRGYVRENKDFVPYFRSATPEQELGKLPLGSRPAKRRPTGGVESLRAIPWIFAWTQNRLMLPAWLGAGTALQKVVEDGKQNELEAMCRDWPFFSTRLGMLEMVFAKADLWLAEYYDQRLVDKALWPLGKELRNLQEEDIKVVLAIANDSHLMADLPWIAESIQLRNIYTDPLNVLQAELLHRSRQAEKEGQEPDPRVEQALMVTIAGIAAGMRNTG</sequence>